<accession>Q03W30</accession>
<feature type="chain" id="PRO_0000386960" description="Ribosomal RNA small subunit methyltransferase H">
    <location>
        <begin position="1"/>
        <end position="312"/>
    </location>
</feature>
<feature type="binding site" evidence="1">
    <location>
        <begin position="33"/>
        <end position="35"/>
    </location>
    <ligand>
        <name>S-adenosyl-L-methionine</name>
        <dbReference type="ChEBI" id="CHEBI:59789"/>
    </ligand>
</feature>
<feature type="binding site" evidence="1">
    <location>
        <position position="52"/>
    </location>
    <ligand>
        <name>S-adenosyl-L-methionine</name>
        <dbReference type="ChEBI" id="CHEBI:59789"/>
    </ligand>
</feature>
<feature type="binding site" evidence="1">
    <location>
        <position position="81"/>
    </location>
    <ligand>
        <name>S-adenosyl-L-methionine</name>
        <dbReference type="ChEBI" id="CHEBI:59789"/>
    </ligand>
</feature>
<feature type="binding site" evidence="1">
    <location>
        <position position="102"/>
    </location>
    <ligand>
        <name>S-adenosyl-L-methionine</name>
        <dbReference type="ChEBI" id="CHEBI:59789"/>
    </ligand>
</feature>
<feature type="binding site" evidence="1">
    <location>
        <position position="109"/>
    </location>
    <ligand>
        <name>S-adenosyl-L-methionine</name>
        <dbReference type="ChEBI" id="CHEBI:59789"/>
    </ligand>
</feature>
<name>RSMH_LEUMM</name>
<keyword id="KW-0963">Cytoplasm</keyword>
<keyword id="KW-0489">Methyltransferase</keyword>
<keyword id="KW-1185">Reference proteome</keyword>
<keyword id="KW-0698">rRNA processing</keyword>
<keyword id="KW-0949">S-adenosyl-L-methionine</keyword>
<keyword id="KW-0808">Transferase</keyword>
<evidence type="ECO:0000255" key="1">
    <source>
        <dbReference type="HAMAP-Rule" id="MF_01007"/>
    </source>
</evidence>
<protein>
    <recommendedName>
        <fullName evidence="1">Ribosomal RNA small subunit methyltransferase H</fullName>
        <ecNumber evidence="1">2.1.1.199</ecNumber>
    </recommendedName>
    <alternativeName>
        <fullName evidence="1">16S rRNA m(4)C1402 methyltransferase</fullName>
    </alternativeName>
    <alternativeName>
        <fullName evidence="1">rRNA (cytosine-N(4)-)-methyltransferase RsmH</fullName>
    </alternativeName>
</protein>
<comment type="function">
    <text evidence="1">Specifically methylates the N4 position of cytidine in position 1402 (C1402) of 16S rRNA.</text>
</comment>
<comment type="catalytic activity">
    <reaction evidence="1">
        <text>cytidine(1402) in 16S rRNA + S-adenosyl-L-methionine = N(4)-methylcytidine(1402) in 16S rRNA + S-adenosyl-L-homocysteine + H(+)</text>
        <dbReference type="Rhea" id="RHEA:42928"/>
        <dbReference type="Rhea" id="RHEA-COMP:10286"/>
        <dbReference type="Rhea" id="RHEA-COMP:10287"/>
        <dbReference type="ChEBI" id="CHEBI:15378"/>
        <dbReference type="ChEBI" id="CHEBI:57856"/>
        <dbReference type="ChEBI" id="CHEBI:59789"/>
        <dbReference type="ChEBI" id="CHEBI:74506"/>
        <dbReference type="ChEBI" id="CHEBI:82748"/>
        <dbReference type="EC" id="2.1.1.199"/>
    </reaction>
</comment>
<comment type="subcellular location">
    <subcellularLocation>
        <location evidence="1">Cytoplasm</location>
    </subcellularLocation>
</comment>
<comment type="similarity">
    <text evidence="1">Belongs to the methyltransferase superfamily. RsmH family.</text>
</comment>
<gene>
    <name evidence="1" type="primary">rsmH</name>
    <name type="synonym">mraW</name>
    <name type="ordered locus">LEUM_1500</name>
</gene>
<organism>
    <name type="scientific">Leuconostoc mesenteroides subsp. mesenteroides (strain ATCC 8293 / DSM 20343 / BCRC 11652 / CCM 1803 / JCM 6124 / NCDO 523 / NBRC 100496 / NCIMB 8023 / NCTC 12954 / NRRL B-1118 / 37Y)</name>
    <dbReference type="NCBI Taxonomy" id="203120"/>
    <lineage>
        <taxon>Bacteria</taxon>
        <taxon>Bacillati</taxon>
        <taxon>Bacillota</taxon>
        <taxon>Bacilli</taxon>
        <taxon>Lactobacillales</taxon>
        <taxon>Lactobacillaceae</taxon>
        <taxon>Leuconostoc</taxon>
    </lineage>
</organism>
<proteinExistence type="inferred from homology"/>
<dbReference type="EC" id="2.1.1.199" evidence="1"/>
<dbReference type="EMBL" id="CP000414">
    <property type="protein sequence ID" value="ABJ62592.1"/>
    <property type="molecule type" value="Genomic_DNA"/>
</dbReference>
<dbReference type="RefSeq" id="WP_011680174.1">
    <property type="nucleotide sequence ID" value="NC_008531.1"/>
</dbReference>
<dbReference type="SMR" id="Q03W30"/>
<dbReference type="EnsemblBacteria" id="ABJ62592">
    <property type="protein sequence ID" value="ABJ62592"/>
    <property type="gene ID" value="LEUM_1500"/>
</dbReference>
<dbReference type="GeneID" id="29577406"/>
<dbReference type="KEGG" id="lme:LEUM_1500"/>
<dbReference type="eggNOG" id="COG0275">
    <property type="taxonomic scope" value="Bacteria"/>
</dbReference>
<dbReference type="HOGENOM" id="CLU_038422_2_0_9"/>
<dbReference type="Proteomes" id="UP000000362">
    <property type="component" value="Chromosome"/>
</dbReference>
<dbReference type="GO" id="GO:0005737">
    <property type="term" value="C:cytoplasm"/>
    <property type="evidence" value="ECO:0007669"/>
    <property type="project" value="UniProtKB-SubCell"/>
</dbReference>
<dbReference type="GO" id="GO:0071424">
    <property type="term" value="F:rRNA (cytosine-N4-)-methyltransferase activity"/>
    <property type="evidence" value="ECO:0007669"/>
    <property type="project" value="UniProtKB-UniRule"/>
</dbReference>
<dbReference type="GO" id="GO:0070475">
    <property type="term" value="P:rRNA base methylation"/>
    <property type="evidence" value="ECO:0007669"/>
    <property type="project" value="UniProtKB-UniRule"/>
</dbReference>
<dbReference type="FunFam" id="1.10.150.170:FF:000001">
    <property type="entry name" value="Ribosomal RNA small subunit methyltransferase H"/>
    <property type="match status" value="1"/>
</dbReference>
<dbReference type="Gene3D" id="1.10.150.170">
    <property type="entry name" value="Putative methyltransferase TM0872, insert domain"/>
    <property type="match status" value="1"/>
</dbReference>
<dbReference type="Gene3D" id="3.40.50.150">
    <property type="entry name" value="Vaccinia Virus protein VP39"/>
    <property type="match status" value="1"/>
</dbReference>
<dbReference type="HAMAP" id="MF_01007">
    <property type="entry name" value="16SrRNA_methyltr_H"/>
    <property type="match status" value="1"/>
</dbReference>
<dbReference type="InterPro" id="IPR002903">
    <property type="entry name" value="RsmH"/>
</dbReference>
<dbReference type="InterPro" id="IPR023397">
    <property type="entry name" value="SAM-dep_MeTrfase_MraW_recog"/>
</dbReference>
<dbReference type="InterPro" id="IPR029063">
    <property type="entry name" value="SAM-dependent_MTases_sf"/>
</dbReference>
<dbReference type="NCBIfam" id="TIGR00006">
    <property type="entry name" value="16S rRNA (cytosine(1402)-N(4))-methyltransferase RsmH"/>
    <property type="match status" value="1"/>
</dbReference>
<dbReference type="PANTHER" id="PTHR11265:SF0">
    <property type="entry name" value="12S RRNA N4-METHYLCYTIDINE METHYLTRANSFERASE"/>
    <property type="match status" value="1"/>
</dbReference>
<dbReference type="PANTHER" id="PTHR11265">
    <property type="entry name" value="S-ADENOSYL-METHYLTRANSFERASE MRAW"/>
    <property type="match status" value="1"/>
</dbReference>
<dbReference type="Pfam" id="PF01795">
    <property type="entry name" value="Methyltransf_5"/>
    <property type="match status" value="1"/>
</dbReference>
<dbReference type="PIRSF" id="PIRSF004486">
    <property type="entry name" value="MraW"/>
    <property type="match status" value="1"/>
</dbReference>
<dbReference type="SUPFAM" id="SSF81799">
    <property type="entry name" value="Putative methyltransferase TM0872, insert domain"/>
    <property type="match status" value="1"/>
</dbReference>
<dbReference type="SUPFAM" id="SSF53335">
    <property type="entry name" value="S-adenosyl-L-methionine-dependent methyltransferases"/>
    <property type="match status" value="1"/>
</dbReference>
<reference key="1">
    <citation type="journal article" date="2006" name="Proc. Natl. Acad. Sci. U.S.A.">
        <title>Comparative genomics of the lactic acid bacteria.</title>
        <authorList>
            <person name="Makarova K.S."/>
            <person name="Slesarev A."/>
            <person name="Wolf Y.I."/>
            <person name="Sorokin A."/>
            <person name="Mirkin B."/>
            <person name="Koonin E.V."/>
            <person name="Pavlov A."/>
            <person name="Pavlova N."/>
            <person name="Karamychev V."/>
            <person name="Polouchine N."/>
            <person name="Shakhova V."/>
            <person name="Grigoriev I."/>
            <person name="Lou Y."/>
            <person name="Rohksar D."/>
            <person name="Lucas S."/>
            <person name="Huang K."/>
            <person name="Goodstein D.M."/>
            <person name="Hawkins T."/>
            <person name="Plengvidhya V."/>
            <person name="Welker D."/>
            <person name="Hughes J."/>
            <person name="Goh Y."/>
            <person name="Benson A."/>
            <person name="Baldwin K."/>
            <person name="Lee J.-H."/>
            <person name="Diaz-Muniz I."/>
            <person name="Dosti B."/>
            <person name="Smeianov V."/>
            <person name="Wechter W."/>
            <person name="Barabote R."/>
            <person name="Lorca G."/>
            <person name="Altermann E."/>
            <person name="Barrangou R."/>
            <person name="Ganesan B."/>
            <person name="Xie Y."/>
            <person name="Rawsthorne H."/>
            <person name="Tamir D."/>
            <person name="Parker C."/>
            <person name="Breidt F."/>
            <person name="Broadbent J.R."/>
            <person name="Hutkins R."/>
            <person name="O'Sullivan D."/>
            <person name="Steele J."/>
            <person name="Unlu G."/>
            <person name="Saier M.H. Jr."/>
            <person name="Klaenhammer T."/>
            <person name="Richardson P."/>
            <person name="Kozyavkin S."/>
            <person name="Weimer B.C."/>
            <person name="Mills D.A."/>
        </authorList>
    </citation>
    <scope>NUCLEOTIDE SEQUENCE [LARGE SCALE GENOMIC DNA]</scope>
    <source>
        <strain>ATCC 8293 / DSM 20343 / BCRC 11652 / CCM 1803 / JCM 6124 / NCDO 523 / NBRC 100496 / NCIMB 8023 / NCTC 12954 / NRRL B-1118 / 37Y</strain>
    </source>
</reference>
<sequence length="312" mass="34839">MPFEHVTVLLHEAIALLDIKPEGTYVDATLGGGGHTGEILKQLTTGTLYSFDQDDTAIQYNAEQYADEIAAGKLVIIHKNFRTLTSALADYGVTAVDGIVYDLGVSSVQFDDGQRGFSYKYDAELDMRMDQRQALTAKTIVNEWPFNELMRVLSRYGEDRFPKQIARKIEQHRENAPINTTFELVDIIKEAIPAPARRKGGHPAKRSFQAFRIAVNDELGALEDSLTQALELLATDGKISVITFQSLEDRLVKQMFREKSSAPELPAGLPVLPGQFEADYELLTRKPISPSTEEMAINHRAESAKLRGIRRK</sequence>